<name>TSN10_MOUSE</name>
<protein>
    <recommendedName>
        <fullName>Tetraspanin-10</fullName>
        <shortName>Tspan-10</shortName>
    </recommendedName>
    <alternativeName>
        <fullName>Oculospanin</fullName>
    </alternativeName>
</protein>
<gene>
    <name type="primary">Tspan10</name>
    <name type="synonym">Ocsp</name>
</gene>
<comment type="function">
    <text evidence="4 5">Part of TspanC8 subgroup, composed of 6 members that interact with the transmembrane metalloprotease ADAM10. This interaction is required for ADAM10 exit from the endoplasmic reticulum and for enzymatic maturation and trafficking to the cell surface as well as substrate specificity. Different TspanC8/ADAM10 complexes have distinct substrates.</text>
</comment>
<comment type="subunit">
    <text evidence="4 5">Interacts with ADAM10.</text>
</comment>
<comment type="subcellular location">
    <subcellularLocation>
        <location evidence="6">Cell membrane</location>
        <topology evidence="6">Multi-pass membrane protein</topology>
    </subcellularLocation>
</comment>
<comment type="similarity">
    <text evidence="6">Belongs to the tetraspanin (TM4SF) family.</text>
</comment>
<proteinExistence type="evidence at protein level"/>
<organism>
    <name type="scientific">Mus musculus</name>
    <name type="common">Mouse</name>
    <dbReference type="NCBI Taxonomy" id="10090"/>
    <lineage>
        <taxon>Eukaryota</taxon>
        <taxon>Metazoa</taxon>
        <taxon>Chordata</taxon>
        <taxon>Craniata</taxon>
        <taxon>Vertebrata</taxon>
        <taxon>Euteleostomi</taxon>
        <taxon>Mammalia</taxon>
        <taxon>Eutheria</taxon>
        <taxon>Euarchontoglires</taxon>
        <taxon>Glires</taxon>
        <taxon>Rodentia</taxon>
        <taxon>Myomorpha</taxon>
        <taxon>Muroidea</taxon>
        <taxon>Muridae</taxon>
        <taxon>Murinae</taxon>
        <taxon>Mus</taxon>
        <taxon>Mus</taxon>
    </lineage>
</organism>
<reference key="1">
    <citation type="journal article" date="2005" name="Science">
        <title>The transcriptional landscape of the mammalian genome.</title>
        <authorList>
            <person name="Carninci P."/>
            <person name="Kasukawa T."/>
            <person name="Katayama S."/>
            <person name="Gough J."/>
            <person name="Frith M.C."/>
            <person name="Maeda N."/>
            <person name="Oyama R."/>
            <person name="Ravasi T."/>
            <person name="Lenhard B."/>
            <person name="Wells C."/>
            <person name="Kodzius R."/>
            <person name="Shimokawa K."/>
            <person name="Bajic V.B."/>
            <person name="Brenner S.E."/>
            <person name="Batalov S."/>
            <person name="Forrest A.R."/>
            <person name="Zavolan M."/>
            <person name="Davis M.J."/>
            <person name="Wilming L.G."/>
            <person name="Aidinis V."/>
            <person name="Allen J.E."/>
            <person name="Ambesi-Impiombato A."/>
            <person name="Apweiler R."/>
            <person name="Aturaliya R.N."/>
            <person name="Bailey T.L."/>
            <person name="Bansal M."/>
            <person name="Baxter L."/>
            <person name="Beisel K.W."/>
            <person name="Bersano T."/>
            <person name="Bono H."/>
            <person name="Chalk A.M."/>
            <person name="Chiu K.P."/>
            <person name="Choudhary V."/>
            <person name="Christoffels A."/>
            <person name="Clutterbuck D.R."/>
            <person name="Crowe M.L."/>
            <person name="Dalla E."/>
            <person name="Dalrymple B.P."/>
            <person name="de Bono B."/>
            <person name="Della Gatta G."/>
            <person name="di Bernardo D."/>
            <person name="Down T."/>
            <person name="Engstrom P."/>
            <person name="Fagiolini M."/>
            <person name="Faulkner G."/>
            <person name="Fletcher C.F."/>
            <person name="Fukushima T."/>
            <person name="Furuno M."/>
            <person name="Futaki S."/>
            <person name="Gariboldi M."/>
            <person name="Georgii-Hemming P."/>
            <person name="Gingeras T.R."/>
            <person name="Gojobori T."/>
            <person name="Green R.E."/>
            <person name="Gustincich S."/>
            <person name="Harbers M."/>
            <person name="Hayashi Y."/>
            <person name="Hensch T.K."/>
            <person name="Hirokawa N."/>
            <person name="Hill D."/>
            <person name="Huminiecki L."/>
            <person name="Iacono M."/>
            <person name="Ikeo K."/>
            <person name="Iwama A."/>
            <person name="Ishikawa T."/>
            <person name="Jakt M."/>
            <person name="Kanapin A."/>
            <person name="Katoh M."/>
            <person name="Kawasawa Y."/>
            <person name="Kelso J."/>
            <person name="Kitamura H."/>
            <person name="Kitano H."/>
            <person name="Kollias G."/>
            <person name="Krishnan S.P."/>
            <person name="Kruger A."/>
            <person name="Kummerfeld S.K."/>
            <person name="Kurochkin I.V."/>
            <person name="Lareau L.F."/>
            <person name="Lazarevic D."/>
            <person name="Lipovich L."/>
            <person name="Liu J."/>
            <person name="Liuni S."/>
            <person name="McWilliam S."/>
            <person name="Madan Babu M."/>
            <person name="Madera M."/>
            <person name="Marchionni L."/>
            <person name="Matsuda H."/>
            <person name="Matsuzawa S."/>
            <person name="Miki H."/>
            <person name="Mignone F."/>
            <person name="Miyake S."/>
            <person name="Morris K."/>
            <person name="Mottagui-Tabar S."/>
            <person name="Mulder N."/>
            <person name="Nakano N."/>
            <person name="Nakauchi H."/>
            <person name="Ng P."/>
            <person name="Nilsson R."/>
            <person name="Nishiguchi S."/>
            <person name="Nishikawa S."/>
            <person name="Nori F."/>
            <person name="Ohara O."/>
            <person name="Okazaki Y."/>
            <person name="Orlando V."/>
            <person name="Pang K.C."/>
            <person name="Pavan W.J."/>
            <person name="Pavesi G."/>
            <person name="Pesole G."/>
            <person name="Petrovsky N."/>
            <person name="Piazza S."/>
            <person name="Reed J."/>
            <person name="Reid J.F."/>
            <person name="Ring B.Z."/>
            <person name="Ringwald M."/>
            <person name="Rost B."/>
            <person name="Ruan Y."/>
            <person name="Salzberg S.L."/>
            <person name="Sandelin A."/>
            <person name="Schneider C."/>
            <person name="Schoenbach C."/>
            <person name="Sekiguchi K."/>
            <person name="Semple C.A."/>
            <person name="Seno S."/>
            <person name="Sessa L."/>
            <person name="Sheng Y."/>
            <person name="Shibata Y."/>
            <person name="Shimada H."/>
            <person name="Shimada K."/>
            <person name="Silva D."/>
            <person name="Sinclair B."/>
            <person name="Sperling S."/>
            <person name="Stupka E."/>
            <person name="Sugiura K."/>
            <person name="Sultana R."/>
            <person name="Takenaka Y."/>
            <person name="Taki K."/>
            <person name="Tammoja K."/>
            <person name="Tan S.L."/>
            <person name="Tang S."/>
            <person name="Taylor M.S."/>
            <person name="Tegner J."/>
            <person name="Teichmann S.A."/>
            <person name="Ueda H.R."/>
            <person name="van Nimwegen E."/>
            <person name="Verardo R."/>
            <person name="Wei C.L."/>
            <person name="Yagi K."/>
            <person name="Yamanishi H."/>
            <person name="Zabarovsky E."/>
            <person name="Zhu S."/>
            <person name="Zimmer A."/>
            <person name="Hide W."/>
            <person name="Bult C."/>
            <person name="Grimmond S.M."/>
            <person name="Teasdale R.D."/>
            <person name="Liu E.T."/>
            <person name="Brusic V."/>
            <person name="Quackenbush J."/>
            <person name="Wahlestedt C."/>
            <person name="Mattick J.S."/>
            <person name="Hume D.A."/>
            <person name="Kai C."/>
            <person name="Sasaki D."/>
            <person name="Tomaru Y."/>
            <person name="Fukuda S."/>
            <person name="Kanamori-Katayama M."/>
            <person name="Suzuki M."/>
            <person name="Aoki J."/>
            <person name="Arakawa T."/>
            <person name="Iida J."/>
            <person name="Imamura K."/>
            <person name="Itoh M."/>
            <person name="Kato T."/>
            <person name="Kawaji H."/>
            <person name="Kawagashira N."/>
            <person name="Kawashima T."/>
            <person name="Kojima M."/>
            <person name="Kondo S."/>
            <person name="Konno H."/>
            <person name="Nakano K."/>
            <person name="Ninomiya N."/>
            <person name="Nishio T."/>
            <person name="Okada M."/>
            <person name="Plessy C."/>
            <person name="Shibata K."/>
            <person name="Shiraki T."/>
            <person name="Suzuki S."/>
            <person name="Tagami M."/>
            <person name="Waki K."/>
            <person name="Watahiki A."/>
            <person name="Okamura-Oho Y."/>
            <person name="Suzuki H."/>
            <person name="Kawai J."/>
            <person name="Hayashizaki Y."/>
        </authorList>
    </citation>
    <scope>NUCLEOTIDE SEQUENCE [LARGE SCALE MRNA]</scope>
    <source>
        <strain>C57BL/6J</strain>
        <tissue>Eye</tissue>
    </source>
</reference>
<reference key="2">
    <citation type="journal article" date="2004" name="Genome Res.">
        <title>The status, quality, and expansion of the NIH full-length cDNA project: the Mammalian Gene Collection (MGC).</title>
        <authorList>
            <consortium name="The MGC Project Team"/>
        </authorList>
    </citation>
    <scope>NUCLEOTIDE SEQUENCE [LARGE SCALE MRNA]</scope>
    <source>
        <tissue>Salivary gland</tissue>
    </source>
</reference>
<reference key="3">
    <citation type="journal article" date="2012" name="J. Biol. Chem.">
        <title>The TspanC8 subgroup of tetraspanins interacts with A disintegrin and metalloprotease 10 (ADAM10) and regulates its maturation and cell surface expression.</title>
        <authorList>
            <person name="Haining E.J."/>
            <person name="Yang J."/>
            <person name="Bailey R.L."/>
            <person name="Khan K."/>
            <person name="Collier R."/>
            <person name="Tsai S."/>
            <person name="Watson S.P."/>
            <person name="Frampton J."/>
            <person name="Garcia P."/>
            <person name="Tomlinson M.G."/>
        </authorList>
    </citation>
    <scope>FUNCTION</scope>
    <scope>INTERACTION WITH ADAM10</scope>
</reference>
<reference key="4">
    <citation type="journal article" date="2016" name="J. Biol. Chem.">
        <title>TspanC8 tetraspanins and A disintegrin and metalloprotease 10 (ADAM10) interact via their extracellular regions: evidence for distinct binding mechanisms for different TspanC8 proteins.</title>
        <authorList>
            <person name="Noy P.J."/>
            <person name="Yang J."/>
            <person name="Reyat J.S."/>
            <person name="Matthews A.L."/>
            <person name="Charlton A.E."/>
            <person name="Furmston J."/>
            <person name="Rogers D.A."/>
            <person name="Rainger G.E."/>
            <person name="Tomlinson M.G."/>
        </authorList>
    </citation>
    <scope>FUNCTION</scope>
    <scope>INTERACTION WITH ADAM10</scope>
</reference>
<evidence type="ECO:0000250" key="1">
    <source>
        <dbReference type="UniProtKB" id="O95858"/>
    </source>
</evidence>
<evidence type="ECO:0000255" key="2"/>
<evidence type="ECO:0000256" key="3">
    <source>
        <dbReference type="SAM" id="MobiDB-lite"/>
    </source>
</evidence>
<evidence type="ECO:0000269" key="4">
    <source>
    </source>
</evidence>
<evidence type="ECO:0000269" key="5">
    <source>
    </source>
</evidence>
<evidence type="ECO:0000305" key="6"/>
<keyword id="KW-1003">Cell membrane</keyword>
<keyword id="KW-1015">Disulfide bond</keyword>
<keyword id="KW-0325">Glycoprotein</keyword>
<keyword id="KW-0472">Membrane</keyword>
<keyword id="KW-1185">Reference proteome</keyword>
<keyword id="KW-0812">Transmembrane</keyword>
<keyword id="KW-1133">Transmembrane helix</keyword>
<accession>Q8VCF5</accession>
<feature type="chain" id="PRO_0000219256" description="Tetraspanin-10">
    <location>
        <begin position="1"/>
        <end position="331"/>
    </location>
</feature>
<feature type="topological domain" description="Cytoplasmic" evidence="6">
    <location>
        <begin position="1"/>
        <end position="76"/>
    </location>
</feature>
<feature type="transmembrane region" description="Helical" evidence="2">
    <location>
        <begin position="77"/>
        <end position="97"/>
    </location>
</feature>
<feature type="topological domain" description="Extracellular" evidence="6">
    <location>
        <begin position="98"/>
        <end position="120"/>
    </location>
</feature>
<feature type="transmembrane region" description="Helical" evidence="2">
    <location>
        <begin position="121"/>
        <end position="141"/>
    </location>
</feature>
<feature type="topological domain" description="Cytoplasmic" evidence="6">
    <location>
        <begin position="142"/>
        <end position="152"/>
    </location>
</feature>
<feature type="transmembrane region" description="Helical" evidence="2">
    <location>
        <begin position="153"/>
        <end position="173"/>
    </location>
</feature>
<feature type="topological domain" description="Extracellular" evidence="6">
    <location>
        <begin position="174"/>
        <end position="331"/>
    </location>
</feature>
<feature type="region of interest" description="Disordered" evidence="3">
    <location>
        <begin position="1"/>
        <end position="34"/>
    </location>
</feature>
<feature type="glycosylation site" description="N-linked (GlcNAc...) asparagine" evidence="2">
    <location>
        <position position="226"/>
    </location>
</feature>
<feature type="disulfide bond" evidence="1">
    <location>
        <begin position="210"/>
        <end position="277"/>
    </location>
</feature>
<feature type="disulfide bond" evidence="1">
    <location>
        <begin position="211"/>
        <end position="241"/>
    </location>
</feature>
<feature type="disulfide bond" evidence="1">
    <location>
        <begin position="227"/>
        <end position="235"/>
    </location>
</feature>
<feature type="disulfide bond" evidence="1">
    <location>
        <begin position="242"/>
        <end position="256"/>
    </location>
</feature>
<dbReference type="EMBL" id="AK084214">
    <property type="protein sequence ID" value="BAC39139.1"/>
    <property type="molecule type" value="mRNA"/>
</dbReference>
<dbReference type="EMBL" id="BC019991">
    <property type="protein sequence ID" value="AAH19991.1"/>
    <property type="molecule type" value="mRNA"/>
</dbReference>
<dbReference type="SMR" id="Q8VCF5"/>
<dbReference type="FunCoup" id="Q8VCF5">
    <property type="interactions" value="41"/>
</dbReference>
<dbReference type="STRING" id="10090.ENSMUSP00000041883"/>
<dbReference type="GlyCosmos" id="Q8VCF5">
    <property type="glycosylation" value="1 site, No reported glycans"/>
</dbReference>
<dbReference type="GlyGen" id="Q8VCF5">
    <property type="glycosylation" value="2 sites"/>
</dbReference>
<dbReference type="PhosphoSitePlus" id="Q8VCF5"/>
<dbReference type="PaxDb" id="10090-ENSMUSP00000041883"/>
<dbReference type="AGR" id="MGI:2384781"/>
<dbReference type="MGI" id="MGI:2384781">
    <property type="gene designation" value="Tspan10"/>
</dbReference>
<dbReference type="eggNOG" id="KOG3882">
    <property type="taxonomic scope" value="Eukaryota"/>
</dbReference>
<dbReference type="InParanoid" id="Q8VCF5"/>
<dbReference type="OMA" id="CLDPVPW"/>
<dbReference type="PRO" id="PR:Q8VCF5"/>
<dbReference type="Proteomes" id="UP000000589">
    <property type="component" value="Unplaced"/>
</dbReference>
<dbReference type="RNAct" id="Q8VCF5">
    <property type="molecule type" value="protein"/>
</dbReference>
<dbReference type="GO" id="GO:0005886">
    <property type="term" value="C:plasma membrane"/>
    <property type="evidence" value="ECO:0007669"/>
    <property type="project" value="UniProtKB-SubCell"/>
</dbReference>
<dbReference type="GO" id="GO:0019899">
    <property type="term" value="F:enzyme binding"/>
    <property type="evidence" value="ECO:0000353"/>
    <property type="project" value="UniProtKB"/>
</dbReference>
<dbReference type="GO" id="GO:0051604">
    <property type="term" value="P:protein maturation"/>
    <property type="evidence" value="ECO:0000314"/>
    <property type="project" value="UniProtKB"/>
</dbReference>
<dbReference type="CDD" id="cd03167">
    <property type="entry name" value="oculospanin_like_LEL"/>
    <property type="match status" value="1"/>
</dbReference>
<dbReference type="FunFam" id="1.10.1450.10:FF:000033">
    <property type="entry name" value="Tetraspanin"/>
    <property type="match status" value="1"/>
</dbReference>
<dbReference type="Gene3D" id="1.10.1450.10">
    <property type="entry name" value="Tetraspanin"/>
    <property type="match status" value="1"/>
</dbReference>
<dbReference type="InterPro" id="IPR018499">
    <property type="entry name" value="Tetraspanin/Peripherin"/>
</dbReference>
<dbReference type="InterPro" id="IPR008952">
    <property type="entry name" value="Tetraspanin_EC2_sf"/>
</dbReference>
<dbReference type="PANTHER" id="PTHR19282">
    <property type="entry name" value="TETRASPANIN"/>
    <property type="match status" value="1"/>
</dbReference>
<dbReference type="PANTHER" id="PTHR19282:SF550">
    <property type="entry name" value="TETRASPANIN-10"/>
    <property type="match status" value="1"/>
</dbReference>
<dbReference type="Pfam" id="PF00335">
    <property type="entry name" value="Tetraspanin"/>
    <property type="match status" value="1"/>
</dbReference>
<dbReference type="PRINTS" id="PR00259">
    <property type="entry name" value="TMFOUR"/>
</dbReference>
<dbReference type="SUPFAM" id="SSF48652">
    <property type="entry name" value="Tetraspanin"/>
    <property type="match status" value="1"/>
</dbReference>
<sequence length="331" mass="35182">MKEEECSPLLSQDTAGREHPLTRNSPPTANIPCPAPWENQKGSWGCRCCPGAKRQASGEGQASSLPLSTGSNCVKYLIFLSNFLFSLPSLLALAAGLWGLTVKRSQGIGWGGPVPTDPMLMLVLGGLVVSVVSLSGCLGAFCENSCLLHWYCGAVLFCLALEALAGVLMVTLWKPLQDSLKYTLHAAIIHYWDDPDLHFLLDQVQLGLQCCGAVSYQDWQQNLYFNCSSPGVQACSLPASCCINPQEDGAVVNTQCGFGALGLDQNVAGQVVFLQGCWPALQEWLRGNTGAIGDCAVAVVMIQGTELLLAACLLRALAVHEAAEDIEAGPL</sequence>